<keyword id="KW-0030">Aminoacyl-tRNA synthetase</keyword>
<keyword id="KW-0067">ATP-binding</keyword>
<keyword id="KW-0963">Cytoplasm</keyword>
<keyword id="KW-0436">Ligase</keyword>
<keyword id="KW-0479">Metal-binding</keyword>
<keyword id="KW-0547">Nucleotide-binding</keyword>
<keyword id="KW-0648">Protein biosynthesis</keyword>
<keyword id="KW-1185">Reference proteome</keyword>
<keyword id="KW-0862">Zinc</keyword>
<accession>A9MLA7</accession>
<feature type="chain" id="PRO_0000332894" description="Cysteine--tRNA ligase">
    <location>
        <begin position="1"/>
        <end position="461"/>
    </location>
</feature>
<feature type="short sequence motif" description="'HIGH' region">
    <location>
        <begin position="30"/>
        <end position="40"/>
    </location>
</feature>
<feature type="short sequence motif" description="'KMSKS' region">
    <location>
        <begin position="266"/>
        <end position="270"/>
    </location>
</feature>
<feature type="binding site" evidence="1">
    <location>
        <position position="28"/>
    </location>
    <ligand>
        <name>Zn(2+)</name>
        <dbReference type="ChEBI" id="CHEBI:29105"/>
    </ligand>
</feature>
<feature type="binding site" evidence="1">
    <location>
        <position position="209"/>
    </location>
    <ligand>
        <name>Zn(2+)</name>
        <dbReference type="ChEBI" id="CHEBI:29105"/>
    </ligand>
</feature>
<feature type="binding site" evidence="1">
    <location>
        <position position="234"/>
    </location>
    <ligand>
        <name>Zn(2+)</name>
        <dbReference type="ChEBI" id="CHEBI:29105"/>
    </ligand>
</feature>
<feature type="binding site" evidence="1">
    <location>
        <position position="238"/>
    </location>
    <ligand>
        <name>Zn(2+)</name>
        <dbReference type="ChEBI" id="CHEBI:29105"/>
    </ligand>
</feature>
<feature type="binding site" evidence="1">
    <location>
        <position position="269"/>
    </location>
    <ligand>
        <name>ATP</name>
        <dbReference type="ChEBI" id="CHEBI:30616"/>
    </ligand>
</feature>
<reference key="1">
    <citation type="submission" date="2007-11" db="EMBL/GenBank/DDBJ databases">
        <authorList>
            <consortium name="The Salmonella enterica serovar Arizonae Genome Sequencing Project"/>
            <person name="McClelland M."/>
            <person name="Sanderson E.K."/>
            <person name="Porwollik S."/>
            <person name="Spieth J."/>
            <person name="Clifton W.S."/>
            <person name="Fulton R."/>
            <person name="Chunyan W."/>
            <person name="Wollam A."/>
            <person name="Shah N."/>
            <person name="Pepin K."/>
            <person name="Bhonagiri V."/>
            <person name="Nash W."/>
            <person name="Johnson M."/>
            <person name="Thiruvilangam P."/>
            <person name="Wilson R."/>
        </authorList>
    </citation>
    <scope>NUCLEOTIDE SEQUENCE [LARGE SCALE GENOMIC DNA]</scope>
    <source>
        <strain>ATCC BAA-731 / CDC346-86 / RSK2980</strain>
    </source>
</reference>
<protein>
    <recommendedName>
        <fullName evidence="1">Cysteine--tRNA ligase</fullName>
        <ecNumber evidence="1">6.1.1.16</ecNumber>
    </recommendedName>
    <alternativeName>
        <fullName evidence="1">Cysteinyl-tRNA synthetase</fullName>
        <shortName evidence="1">CysRS</shortName>
    </alternativeName>
</protein>
<comment type="catalytic activity">
    <reaction evidence="1">
        <text>tRNA(Cys) + L-cysteine + ATP = L-cysteinyl-tRNA(Cys) + AMP + diphosphate</text>
        <dbReference type="Rhea" id="RHEA:17773"/>
        <dbReference type="Rhea" id="RHEA-COMP:9661"/>
        <dbReference type="Rhea" id="RHEA-COMP:9679"/>
        <dbReference type="ChEBI" id="CHEBI:30616"/>
        <dbReference type="ChEBI" id="CHEBI:33019"/>
        <dbReference type="ChEBI" id="CHEBI:35235"/>
        <dbReference type="ChEBI" id="CHEBI:78442"/>
        <dbReference type="ChEBI" id="CHEBI:78517"/>
        <dbReference type="ChEBI" id="CHEBI:456215"/>
        <dbReference type="EC" id="6.1.1.16"/>
    </reaction>
</comment>
<comment type="cofactor">
    <cofactor evidence="1">
        <name>Zn(2+)</name>
        <dbReference type="ChEBI" id="CHEBI:29105"/>
    </cofactor>
    <text evidence="1">Binds 1 zinc ion per subunit.</text>
</comment>
<comment type="subunit">
    <text evidence="1">Monomer.</text>
</comment>
<comment type="subcellular location">
    <subcellularLocation>
        <location evidence="1">Cytoplasm</location>
    </subcellularLocation>
</comment>
<comment type="similarity">
    <text evidence="1">Belongs to the class-I aminoacyl-tRNA synthetase family.</text>
</comment>
<sequence>MLKIFNTLTRQKEEFKPIHAGEVGMYVCGITVYDLCHIGHGRTFVAFDVVARYLRFLGYKLKYVRNITDIDDKIIKRANENGESFVALVDRMIAEMHQDFDALNILRPDSEPRATHHIQEIIEITRTLIEKGHAYVADNGDVMFDVPTDPTYGQLSRQDLEQLQAGARVDVVDVKRNPMDFVLWKMSKEGEPSWPSPWGEGRPGWHIECSAMNCKQLGNHFDIHGGGSDLMFPHHENEIAQSTCAHDGEYVNYWMHSGMVMVDREKMSKSLGNFFTVRDVLKYYDAETVRYFLMSGHYRSQLNYSEENLKQARASLERLYTALRGTDKSAAPAGGEAFEARFVEAMNDDFNTPEAYSVLFDMAREVNRLKSEDMTAANAMASHLRKISGVLGLLEQEPDAFLQSGAQADDGEVAEIEALIQQRLDARKAKDWAAADAARDRLTEMGIILEDGPQGTTWRRK</sequence>
<proteinExistence type="inferred from homology"/>
<evidence type="ECO:0000255" key="1">
    <source>
        <dbReference type="HAMAP-Rule" id="MF_00041"/>
    </source>
</evidence>
<name>SYC_SALAR</name>
<organism>
    <name type="scientific">Salmonella arizonae (strain ATCC BAA-731 / CDC346-86 / RSK2980)</name>
    <dbReference type="NCBI Taxonomy" id="41514"/>
    <lineage>
        <taxon>Bacteria</taxon>
        <taxon>Pseudomonadati</taxon>
        <taxon>Pseudomonadota</taxon>
        <taxon>Gammaproteobacteria</taxon>
        <taxon>Enterobacterales</taxon>
        <taxon>Enterobacteriaceae</taxon>
        <taxon>Salmonella</taxon>
    </lineage>
</organism>
<gene>
    <name evidence="1" type="primary">cysS</name>
    <name type="ordered locus">SARI_02415</name>
</gene>
<dbReference type="EC" id="6.1.1.16" evidence="1"/>
<dbReference type="EMBL" id="CP000880">
    <property type="protein sequence ID" value="ABX22277.1"/>
    <property type="molecule type" value="Genomic_DNA"/>
</dbReference>
<dbReference type="SMR" id="A9MLA7"/>
<dbReference type="STRING" id="41514.SARI_02415"/>
<dbReference type="KEGG" id="ses:SARI_02415"/>
<dbReference type="HOGENOM" id="CLU_013528_0_1_6"/>
<dbReference type="Proteomes" id="UP000002084">
    <property type="component" value="Chromosome"/>
</dbReference>
<dbReference type="GO" id="GO:0005829">
    <property type="term" value="C:cytosol"/>
    <property type="evidence" value="ECO:0007669"/>
    <property type="project" value="TreeGrafter"/>
</dbReference>
<dbReference type="GO" id="GO:0005524">
    <property type="term" value="F:ATP binding"/>
    <property type="evidence" value="ECO:0007669"/>
    <property type="project" value="UniProtKB-UniRule"/>
</dbReference>
<dbReference type="GO" id="GO:0004817">
    <property type="term" value="F:cysteine-tRNA ligase activity"/>
    <property type="evidence" value="ECO:0007669"/>
    <property type="project" value="UniProtKB-UniRule"/>
</dbReference>
<dbReference type="GO" id="GO:0008270">
    <property type="term" value="F:zinc ion binding"/>
    <property type="evidence" value="ECO:0007669"/>
    <property type="project" value="UniProtKB-UniRule"/>
</dbReference>
<dbReference type="GO" id="GO:0006423">
    <property type="term" value="P:cysteinyl-tRNA aminoacylation"/>
    <property type="evidence" value="ECO:0007669"/>
    <property type="project" value="UniProtKB-UniRule"/>
</dbReference>
<dbReference type="CDD" id="cd07963">
    <property type="entry name" value="Anticodon_Ia_Cys"/>
    <property type="match status" value="1"/>
</dbReference>
<dbReference type="CDD" id="cd00672">
    <property type="entry name" value="CysRS_core"/>
    <property type="match status" value="1"/>
</dbReference>
<dbReference type="FunFam" id="1.20.120.1910:FF:000001">
    <property type="entry name" value="Cysteine--tRNA ligase"/>
    <property type="match status" value="1"/>
</dbReference>
<dbReference type="FunFam" id="3.40.50.620:FF:000009">
    <property type="entry name" value="Cysteine--tRNA ligase"/>
    <property type="match status" value="1"/>
</dbReference>
<dbReference type="Gene3D" id="1.20.120.1910">
    <property type="entry name" value="Cysteine-tRNA ligase, C-terminal anti-codon recognition domain"/>
    <property type="match status" value="1"/>
</dbReference>
<dbReference type="Gene3D" id="3.40.50.620">
    <property type="entry name" value="HUPs"/>
    <property type="match status" value="1"/>
</dbReference>
<dbReference type="HAMAP" id="MF_00041">
    <property type="entry name" value="Cys_tRNA_synth"/>
    <property type="match status" value="1"/>
</dbReference>
<dbReference type="InterPro" id="IPR015803">
    <property type="entry name" value="Cys-tRNA-ligase"/>
</dbReference>
<dbReference type="InterPro" id="IPR015273">
    <property type="entry name" value="Cys-tRNA-synt_Ia_DALR"/>
</dbReference>
<dbReference type="InterPro" id="IPR024909">
    <property type="entry name" value="Cys-tRNA/MSH_ligase"/>
</dbReference>
<dbReference type="InterPro" id="IPR056411">
    <property type="entry name" value="CysS_C"/>
</dbReference>
<dbReference type="InterPro" id="IPR014729">
    <property type="entry name" value="Rossmann-like_a/b/a_fold"/>
</dbReference>
<dbReference type="InterPro" id="IPR032678">
    <property type="entry name" value="tRNA-synt_1_cat_dom"/>
</dbReference>
<dbReference type="InterPro" id="IPR009080">
    <property type="entry name" value="tRNAsynth_Ia_anticodon-bd"/>
</dbReference>
<dbReference type="NCBIfam" id="TIGR00435">
    <property type="entry name" value="cysS"/>
    <property type="match status" value="1"/>
</dbReference>
<dbReference type="PANTHER" id="PTHR10890:SF3">
    <property type="entry name" value="CYSTEINE--TRNA LIGASE, CYTOPLASMIC"/>
    <property type="match status" value="1"/>
</dbReference>
<dbReference type="PANTHER" id="PTHR10890">
    <property type="entry name" value="CYSTEINYL-TRNA SYNTHETASE"/>
    <property type="match status" value="1"/>
</dbReference>
<dbReference type="Pfam" id="PF23493">
    <property type="entry name" value="CysS_C"/>
    <property type="match status" value="1"/>
</dbReference>
<dbReference type="Pfam" id="PF09190">
    <property type="entry name" value="DALR_2"/>
    <property type="match status" value="1"/>
</dbReference>
<dbReference type="Pfam" id="PF01406">
    <property type="entry name" value="tRNA-synt_1e"/>
    <property type="match status" value="1"/>
</dbReference>
<dbReference type="PRINTS" id="PR00983">
    <property type="entry name" value="TRNASYNTHCYS"/>
</dbReference>
<dbReference type="SMART" id="SM00840">
    <property type="entry name" value="DALR_2"/>
    <property type="match status" value="1"/>
</dbReference>
<dbReference type="SUPFAM" id="SSF47323">
    <property type="entry name" value="Anticodon-binding domain of a subclass of class I aminoacyl-tRNA synthetases"/>
    <property type="match status" value="1"/>
</dbReference>
<dbReference type="SUPFAM" id="SSF52374">
    <property type="entry name" value="Nucleotidylyl transferase"/>
    <property type="match status" value="1"/>
</dbReference>